<evidence type="ECO:0000255" key="1">
    <source>
        <dbReference type="HAMAP-Rule" id="MF_01598"/>
    </source>
</evidence>
<sequence length="121" mass="13115">MYIYWILLGLAIATEITGTLSMKWASVSEGNGGFILMLVMISLSYIFLSFAVKKIALGVAYALWEGIGILFITLFSVLLFDESLSLMKIAGLTTLVAGIVLIKSGTRKARKPELEVNHGAV</sequence>
<protein>
    <recommendedName>
        <fullName evidence="1">Spermidine export protein MdtJ</fullName>
    </recommendedName>
</protein>
<organism>
    <name type="scientific">Escherichia coli (strain SMS-3-5 / SECEC)</name>
    <dbReference type="NCBI Taxonomy" id="439855"/>
    <lineage>
        <taxon>Bacteria</taxon>
        <taxon>Pseudomonadati</taxon>
        <taxon>Pseudomonadota</taxon>
        <taxon>Gammaproteobacteria</taxon>
        <taxon>Enterobacterales</taxon>
        <taxon>Enterobacteriaceae</taxon>
        <taxon>Escherichia</taxon>
    </lineage>
</organism>
<gene>
    <name evidence="1" type="primary">mdtJ</name>
    <name type="ordered locus">EcSMS35_1599</name>
</gene>
<feature type="chain" id="PRO_1000197331" description="Spermidine export protein MdtJ">
    <location>
        <begin position="1"/>
        <end position="121"/>
    </location>
</feature>
<feature type="transmembrane region" description="Helical" evidence="1">
    <location>
        <begin position="1"/>
        <end position="21"/>
    </location>
</feature>
<feature type="transmembrane region" description="Helical" evidence="1">
    <location>
        <begin position="32"/>
        <end position="52"/>
    </location>
</feature>
<feature type="transmembrane region" description="Helical" evidence="1">
    <location>
        <begin position="55"/>
        <end position="75"/>
    </location>
</feature>
<feature type="transmembrane region" description="Helical" evidence="1">
    <location>
        <begin position="82"/>
        <end position="102"/>
    </location>
</feature>
<accession>B1LET6</accession>
<keyword id="KW-0997">Cell inner membrane</keyword>
<keyword id="KW-1003">Cell membrane</keyword>
<keyword id="KW-0472">Membrane</keyword>
<keyword id="KW-0812">Transmembrane</keyword>
<keyword id="KW-1133">Transmembrane helix</keyword>
<keyword id="KW-0813">Transport</keyword>
<name>MDTJ_ECOSM</name>
<dbReference type="EMBL" id="CP000970">
    <property type="protein sequence ID" value="ACB19502.1"/>
    <property type="molecule type" value="Genomic_DNA"/>
</dbReference>
<dbReference type="RefSeq" id="WP_000276149.1">
    <property type="nucleotide sequence ID" value="NC_010498.1"/>
</dbReference>
<dbReference type="SMR" id="B1LET6"/>
<dbReference type="GeneID" id="93775748"/>
<dbReference type="KEGG" id="ecm:EcSMS35_1599"/>
<dbReference type="HOGENOM" id="CLU_133067_0_0_6"/>
<dbReference type="Proteomes" id="UP000007011">
    <property type="component" value="Chromosome"/>
</dbReference>
<dbReference type="GO" id="GO:0005886">
    <property type="term" value="C:plasma membrane"/>
    <property type="evidence" value="ECO:0007669"/>
    <property type="project" value="UniProtKB-SubCell"/>
</dbReference>
<dbReference type="GO" id="GO:0015199">
    <property type="term" value="F:amino-acid betaine transmembrane transporter activity"/>
    <property type="evidence" value="ECO:0007669"/>
    <property type="project" value="TreeGrafter"/>
</dbReference>
<dbReference type="GO" id="GO:0015297">
    <property type="term" value="F:antiporter activity"/>
    <property type="evidence" value="ECO:0007669"/>
    <property type="project" value="TreeGrafter"/>
</dbReference>
<dbReference type="GO" id="GO:0015220">
    <property type="term" value="F:choline transmembrane transporter activity"/>
    <property type="evidence" value="ECO:0007669"/>
    <property type="project" value="TreeGrafter"/>
</dbReference>
<dbReference type="GO" id="GO:0015606">
    <property type="term" value="F:spermidine transmembrane transporter activity"/>
    <property type="evidence" value="ECO:0007669"/>
    <property type="project" value="UniProtKB-UniRule"/>
</dbReference>
<dbReference type="GO" id="GO:0031460">
    <property type="term" value="P:glycine betaine transport"/>
    <property type="evidence" value="ECO:0007669"/>
    <property type="project" value="TreeGrafter"/>
</dbReference>
<dbReference type="FunFam" id="1.10.3730.20:FF:000001">
    <property type="entry name" value="Quaternary ammonium compound resistance transporter SugE"/>
    <property type="match status" value="1"/>
</dbReference>
<dbReference type="Gene3D" id="1.10.3730.20">
    <property type="match status" value="1"/>
</dbReference>
<dbReference type="HAMAP" id="MF_01598">
    <property type="entry name" value="MdtJ"/>
    <property type="match status" value="1"/>
</dbReference>
<dbReference type="InterPro" id="IPR000390">
    <property type="entry name" value="Small_drug/metabolite_transptr"/>
</dbReference>
<dbReference type="InterPro" id="IPR045324">
    <property type="entry name" value="Small_multidrug_res"/>
</dbReference>
<dbReference type="InterPro" id="IPR023740">
    <property type="entry name" value="Spermidine_export_MdtJ"/>
</dbReference>
<dbReference type="NCBIfam" id="NF007767">
    <property type="entry name" value="PRK10452.1"/>
    <property type="match status" value="1"/>
</dbReference>
<dbReference type="PANTHER" id="PTHR30561">
    <property type="entry name" value="SMR FAMILY PROTON-DEPENDENT DRUG EFFLUX TRANSPORTER SUGE"/>
    <property type="match status" value="1"/>
</dbReference>
<dbReference type="PANTHER" id="PTHR30561:SF2">
    <property type="entry name" value="SPERMIDINE EXPORT PROTEIN MDTJ"/>
    <property type="match status" value="1"/>
</dbReference>
<dbReference type="Pfam" id="PF00893">
    <property type="entry name" value="Multi_Drug_Res"/>
    <property type="match status" value="1"/>
</dbReference>
<dbReference type="SUPFAM" id="SSF103481">
    <property type="entry name" value="Multidrug resistance efflux transporter EmrE"/>
    <property type="match status" value="1"/>
</dbReference>
<reference key="1">
    <citation type="journal article" date="2008" name="J. Bacteriol.">
        <title>Insights into the environmental resistance gene pool from the genome sequence of the multidrug-resistant environmental isolate Escherichia coli SMS-3-5.</title>
        <authorList>
            <person name="Fricke W.F."/>
            <person name="Wright M.S."/>
            <person name="Lindell A.H."/>
            <person name="Harkins D.M."/>
            <person name="Baker-Austin C."/>
            <person name="Ravel J."/>
            <person name="Stepanauskas R."/>
        </authorList>
    </citation>
    <scope>NUCLEOTIDE SEQUENCE [LARGE SCALE GENOMIC DNA]</scope>
    <source>
        <strain>SMS-3-5 / SECEC</strain>
    </source>
</reference>
<comment type="function">
    <text evidence="1">Catalyzes the excretion of spermidine.</text>
</comment>
<comment type="subunit">
    <text evidence="1">Forms a complex with MdtI.</text>
</comment>
<comment type="subcellular location">
    <subcellularLocation>
        <location evidence="1">Cell inner membrane</location>
        <topology evidence="1">Multi-pass membrane protein</topology>
    </subcellularLocation>
</comment>
<comment type="similarity">
    <text evidence="1">Belongs to the drug/metabolite transporter (DMT) superfamily. Small multidrug resistance (SMR) (TC 2.A.7.1) family. MdtJ subfamily.</text>
</comment>
<proteinExistence type="inferred from homology"/>